<comment type="function">
    <text evidence="4">Probable neurotoxin.</text>
</comment>
<comment type="subcellular location">
    <subcellularLocation>
        <location evidence="2">Secreted</location>
    </subcellularLocation>
</comment>
<comment type="tissue specificity">
    <text evidence="5">Expressed by the venom duct.</text>
</comment>
<comment type="domain">
    <text evidence="4">The cysteine framework is V (CC-CC).</text>
</comment>
<comment type="PTM">
    <text evidence="4">Contains 2 disulfide bonds that can be either 'C1-C3, C2-C4' or 'C1-C4, C2-C3', since these disulfide connectivities have been observed for conotoxins with cysteine framework V (for examples, see AC P0DQQ7 and AC P81755).</text>
</comment>
<comment type="similarity">
    <text evidence="1">Belongs to the conotoxin T superfamily.</text>
</comment>
<name>CT54_CONIM</name>
<dbReference type="EMBL" id="JF322911">
    <property type="protein sequence ID" value="ADZ74140.1"/>
    <property type="molecule type" value="mRNA"/>
</dbReference>
<dbReference type="EMBL" id="KT377417">
    <property type="protein sequence ID" value="AME17681.1"/>
    <property type="molecule type" value="mRNA"/>
</dbReference>
<dbReference type="GO" id="GO:0005576">
    <property type="term" value="C:extracellular region"/>
    <property type="evidence" value="ECO:0007669"/>
    <property type="project" value="UniProtKB-SubCell"/>
</dbReference>
<dbReference type="GO" id="GO:0090729">
    <property type="term" value="F:toxin activity"/>
    <property type="evidence" value="ECO:0007669"/>
    <property type="project" value="UniProtKB-KW"/>
</dbReference>
<dbReference type="InterPro" id="IPR031565">
    <property type="entry name" value="T-conotoxin"/>
</dbReference>
<dbReference type="Pfam" id="PF16981">
    <property type="entry name" value="Chi-conotoxin"/>
    <property type="match status" value="1"/>
</dbReference>
<proteinExistence type="evidence at protein level"/>
<evidence type="ECO:0000255" key="1"/>
<evidence type="ECO:0000269" key="2">
    <source>
    </source>
</evidence>
<evidence type="ECO:0000303" key="3">
    <source>
    </source>
</evidence>
<evidence type="ECO:0000305" key="4"/>
<evidence type="ECO:0000305" key="5">
    <source>
    </source>
</evidence>
<evidence type="ECO:0000312" key="6">
    <source>
        <dbReference type="EMBL" id="ADZ74140.1"/>
    </source>
</evidence>
<evidence type="ECO:0000312" key="7">
    <source>
        <dbReference type="EMBL" id="AME17681.1"/>
    </source>
</evidence>
<feature type="signal peptide" evidence="1">
    <location>
        <begin position="1"/>
        <end position="18"/>
    </location>
</feature>
<feature type="propeptide" id="PRO_0000450995" evidence="4">
    <location>
        <begin position="19"/>
        <end position="28"/>
    </location>
</feature>
<feature type="peptide" id="PRO_5007666723" description="Conotoxin Im5.4">
    <location>
        <begin position="29"/>
        <end position="58"/>
    </location>
</feature>
<sequence>MRCLPVVVFLLLLLSAAAAPGVGSKTERLPGLTSSGDSDESLPFLNTICCWSGACCGG</sequence>
<reference key="1">
    <citation type="journal article" date="2012" name="Toxicon">
        <title>Diversity and evolution of conotoxins in Conus virgo, Conus eburneus, Conus imperialis and Conus marmoreus from the South China Sea.</title>
        <authorList>
            <person name="Liu Z."/>
            <person name="Li H."/>
            <person name="Liu N."/>
            <person name="Wu C."/>
            <person name="Jiang J."/>
            <person name="Yue J."/>
            <person name="Jing Y."/>
            <person name="Dai Q."/>
        </authorList>
    </citation>
    <scope>NUCLEOTIDE SEQUENCE [MRNA]</scope>
</reference>
<reference key="2">
    <citation type="journal article" date="2019" name="Mar. Drugs">
        <title>Transcriptomic-proteomic correlation in the predation-evoked venom of the cone snail, Conus imperialis.</title>
        <authorList>
            <person name="Jin A.H."/>
            <person name="Dutertre S."/>
            <person name="Dutt M."/>
            <person name="Lavergne V."/>
            <person name="Jones A."/>
            <person name="Lewis R.J."/>
            <person name="Alewood P.F."/>
        </authorList>
    </citation>
    <scope>NUCLEOTIDE SEQUENCE [MRNA]</scope>
    <scope>IDENTIFICATION BY MASS SPECTROMETRY</scope>
    <scope>SUBCELLULAR LOCATION</scope>
    <source>
        <tissue>Venom</tissue>
        <tissue>Venom duct</tissue>
    </source>
</reference>
<keyword id="KW-1015">Disulfide bond</keyword>
<keyword id="KW-0528">Neurotoxin</keyword>
<keyword id="KW-0964">Secreted</keyword>
<keyword id="KW-0732">Signal</keyword>
<keyword id="KW-0800">Toxin</keyword>
<accession>H8Y1U0</accession>
<protein>
    <recommendedName>
        <fullName evidence="6">Conotoxin Im5.4</fullName>
    </recommendedName>
    <alternativeName>
        <fullName evidence="3 7">Conopeptide im023</fullName>
    </alternativeName>
</protein>
<organism>
    <name type="scientific">Conus imperialis</name>
    <name type="common">Imperial cone</name>
    <dbReference type="NCBI Taxonomy" id="35631"/>
    <lineage>
        <taxon>Eukaryota</taxon>
        <taxon>Metazoa</taxon>
        <taxon>Spiralia</taxon>
        <taxon>Lophotrochozoa</taxon>
        <taxon>Mollusca</taxon>
        <taxon>Gastropoda</taxon>
        <taxon>Caenogastropoda</taxon>
        <taxon>Neogastropoda</taxon>
        <taxon>Conoidea</taxon>
        <taxon>Conidae</taxon>
        <taxon>Conus</taxon>
        <taxon>Stephanoconus</taxon>
    </lineage>
</organism>